<feature type="chain" id="PRO_1000212312" description="L-threonine 3-dehydrogenase">
    <location>
        <begin position="1"/>
        <end position="341"/>
    </location>
</feature>
<feature type="active site" description="Charge relay system" evidence="1">
    <location>
        <position position="40"/>
    </location>
</feature>
<feature type="active site" description="Charge relay system" evidence="1">
    <location>
        <position position="43"/>
    </location>
</feature>
<feature type="binding site" evidence="1">
    <location>
        <position position="38"/>
    </location>
    <ligand>
        <name>Zn(2+)</name>
        <dbReference type="ChEBI" id="CHEBI:29105"/>
        <label>1</label>
        <note>catalytic</note>
    </ligand>
</feature>
<feature type="binding site" evidence="1">
    <location>
        <position position="63"/>
    </location>
    <ligand>
        <name>Zn(2+)</name>
        <dbReference type="ChEBI" id="CHEBI:29105"/>
        <label>1</label>
        <note>catalytic</note>
    </ligand>
</feature>
<feature type="binding site" evidence="1">
    <location>
        <position position="64"/>
    </location>
    <ligand>
        <name>Zn(2+)</name>
        <dbReference type="ChEBI" id="CHEBI:29105"/>
        <label>1</label>
        <note>catalytic</note>
    </ligand>
</feature>
<feature type="binding site" evidence="1">
    <location>
        <position position="93"/>
    </location>
    <ligand>
        <name>Zn(2+)</name>
        <dbReference type="ChEBI" id="CHEBI:29105"/>
        <label>2</label>
    </ligand>
</feature>
<feature type="binding site" evidence="1">
    <location>
        <position position="96"/>
    </location>
    <ligand>
        <name>Zn(2+)</name>
        <dbReference type="ChEBI" id="CHEBI:29105"/>
        <label>2</label>
    </ligand>
</feature>
<feature type="binding site" evidence="1">
    <location>
        <position position="99"/>
    </location>
    <ligand>
        <name>Zn(2+)</name>
        <dbReference type="ChEBI" id="CHEBI:29105"/>
        <label>2</label>
    </ligand>
</feature>
<feature type="binding site" evidence="1">
    <location>
        <position position="107"/>
    </location>
    <ligand>
        <name>Zn(2+)</name>
        <dbReference type="ChEBI" id="CHEBI:29105"/>
        <label>2</label>
    </ligand>
</feature>
<feature type="binding site" evidence="1">
    <location>
        <position position="175"/>
    </location>
    <ligand>
        <name>NAD(+)</name>
        <dbReference type="ChEBI" id="CHEBI:57540"/>
    </ligand>
</feature>
<feature type="binding site" evidence="1">
    <location>
        <position position="195"/>
    </location>
    <ligand>
        <name>NAD(+)</name>
        <dbReference type="ChEBI" id="CHEBI:57540"/>
    </ligand>
</feature>
<feature type="binding site" evidence="1">
    <location>
        <position position="200"/>
    </location>
    <ligand>
        <name>NAD(+)</name>
        <dbReference type="ChEBI" id="CHEBI:57540"/>
    </ligand>
</feature>
<feature type="binding site" evidence="1">
    <location>
        <begin position="262"/>
        <end position="264"/>
    </location>
    <ligand>
        <name>NAD(+)</name>
        <dbReference type="ChEBI" id="CHEBI:57540"/>
    </ligand>
</feature>
<feature type="binding site" evidence="1">
    <location>
        <begin position="286"/>
        <end position="287"/>
    </location>
    <ligand>
        <name>NAD(+)</name>
        <dbReference type="ChEBI" id="CHEBI:57540"/>
    </ligand>
</feature>
<feature type="site" description="Important for catalytic activity for the proton relay mechanism but does not participate directly in the coordination of zinc atom" evidence="1">
    <location>
        <position position="148"/>
    </location>
</feature>
<evidence type="ECO:0000255" key="1">
    <source>
        <dbReference type="HAMAP-Rule" id="MF_00627"/>
    </source>
</evidence>
<protein>
    <recommendedName>
        <fullName evidence="1">L-threonine 3-dehydrogenase</fullName>
        <shortName evidence="1">TDH</shortName>
        <ecNumber evidence="1">1.1.1.103</ecNumber>
    </recommendedName>
</protein>
<reference key="1">
    <citation type="submission" date="2009-03" db="EMBL/GenBank/DDBJ databases">
        <title>Complete genome sequence of Edwardsiella ictaluri 93-146.</title>
        <authorList>
            <person name="Williams M.L."/>
            <person name="Gillaspy A.F."/>
            <person name="Dyer D.W."/>
            <person name="Thune R.L."/>
            <person name="Waldbieser G.C."/>
            <person name="Schuster S.C."/>
            <person name="Gipson J."/>
            <person name="Zaitshik J."/>
            <person name="Landry C."/>
            <person name="Lawrence M.L."/>
        </authorList>
    </citation>
    <scope>NUCLEOTIDE SEQUENCE [LARGE SCALE GENOMIC DNA]</scope>
    <source>
        <strain>93-146</strain>
    </source>
</reference>
<proteinExistence type="inferred from homology"/>
<comment type="function">
    <text evidence="1">Catalyzes the NAD(+)-dependent oxidation of L-threonine to 2-amino-3-ketobutyrate.</text>
</comment>
<comment type="catalytic activity">
    <reaction evidence="1">
        <text>L-threonine + NAD(+) = (2S)-2-amino-3-oxobutanoate + NADH + H(+)</text>
        <dbReference type="Rhea" id="RHEA:13161"/>
        <dbReference type="ChEBI" id="CHEBI:15378"/>
        <dbReference type="ChEBI" id="CHEBI:57540"/>
        <dbReference type="ChEBI" id="CHEBI:57926"/>
        <dbReference type="ChEBI" id="CHEBI:57945"/>
        <dbReference type="ChEBI" id="CHEBI:78948"/>
        <dbReference type="EC" id="1.1.1.103"/>
    </reaction>
</comment>
<comment type="cofactor">
    <cofactor evidence="1">
        <name>Zn(2+)</name>
        <dbReference type="ChEBI" id="CHEBI:29105"/>
    </cofactor>
    <text evidence="1">Binds 2 Zn(2+) ions per subunit.</text>
</comment>
<comment type="pathway">
    <text evidence="1">Amino-acid degradation; L-threonine degradation via oxydo-reductase pathway; glycine from L-threonine: step 1/2.</text>
</comment>
<comment type="subunit">
    <text evidence="1">Homotetramer.</text>
</comment>
<comment type="subcellular location">
    <subcellularLocation>
        <location evidence="1">Cytoplasm</location>
    </subcellularLocation>
</comment>
<comment type="similarity">
    <text evidence="1">Belongs to the zinc-containing alcohol dehydrogenase family.</text>
</comment>
<accession>C5BB99</accession>
<keyword id="KW-0963">Cytoplasm</keyword>
<keyword id="KW-0479">Metal-binding</keyword>
<keyword id="KW-0520">NAD</keyword>
<keyword id="KW-0560">Oxidoreductase</keyword>
<keyword id="KW-0862">Zinc</keyword>
<gene>
    <name evidence="1" type="primary">tdh</name>
    <name type="ordered locus">NT01EI_0074</name>
</gene>
<name>TDH_EDWI9</name>
<sequence length="341" mass="37138">MKALSKLKAEEGIWMTDVPLPALGHNDIMIKIRKAAICGTDVHIYNWDTWSQKTIPVPMVVGHEYVGEVVAVGQEVRGFRIGDRVSGEGHITCGHCRNCRAGRTHLCRNTIGVGVNRQGAFAEYLVIPAFNAFKIPDNIPDALAAIFDPFGNAVHTALSFDLVGEDVLVSGAGPIGIMAAAVCRHVGARHVVITDVNDYRLDLARKMGVTRAVNVSRESLPEVMQALGMSEGFDVGLEMSGAPPAFHTMLDTMNHGGKIAMLGIPPGDMAIDWNQVIFKGLLIKGIYGREMFETWYKMAALIQSGLDLTPIITHQYAIDDFQKGFDVMRSGHSGKVILNWS</sequence>
<dbReference type="EC" id="1.1.1.103" evidence="1"/>
<dbReference type="EMBL" id="CP001600">
    <property type="protein sequence ID" value="ACR67334.1"/>
    <property type="molecule type" value="Genomic_DNA"/>
</dbReference>
<dbReference type="RefSeq" id="WP_015869555.1">
    <property type="nucleotide sequence ID" value="NZ_CP169062.1"/>
</dbReference>
<dbReference type="SMR" id="C5BB99"/>
<dbReference type="STRING" id="67780.B6E78_11525"/>
<dbReference type="GeneID" id="69537182"/>
<dbReference type="KEGG" id="eic:NT01EI_0074"/>
<dbReference type="PATRIC" id="fig|634503.3.peg.67"/>
<dbReference type="HOGENOM" id="CLU_026673_11_0_6"/>
<dbReference type="OrthoDB" id="9773078at2"/>
<dbReference type="UniPathway" id="UPA00046">
    <property type="reaction ID" value="UER00505"/>
</dbReference>
<dbReference type="Proteomes" id="UP000001485">
    <property type="component" value="Chromosome"/>
</dbReference>
<dbReference type="GO" id="GO:0005737">
    <property type="term" value="C:cytoplasm"/>
    <property type="evidence" value="ECO:0007669"/>
    <property type="project" value="UniProtKB-SubCell"/>
</dbReference>
<dbReference type="GO" id="GO:0008743">
    <property type="term" value="F:L-threonine 3-dehydrogenase activity"/>
    <property type="evidence" value="ECO:0007669"/>
    <property type="project" value="UniProtKB-UniRule"/>
</dbReference>
<dbReference type="GO" id="GO:0008270">
    <property type="term" value="F:zinc ion binding"/>
    <property type="evidence" value="ECO:0007669"/>
    <property type="project" value="UniProtKB-UniRule"/>
</dbReference>
<dbReference type="GO" id="GO:0019518">
    <property type="term" value="P:L-threonine catabolic process to glycine"/>
    <property type="evidence" value="ECO:0007669"/>
    <property type="project" value="UniProtKB-UniPathway"/>
</dbReference>
<dbReference type="Gene3D" id="3.90.180.10">
    <property type="entry name" value="Medium-chain alcohol dehydrogenases, catalytic domain"/>
    <property type="match status" value="1"/>
</dbReference>
<dbReference type="Gene3D" id="3.40.50.720">
    <property type="entry name" value="NAD(P)-binding Rossmann-like Domain"/>
    <property type="match status" value="1"/>
</dbReference>
<dbReference type="HAMAP" id="MF_00627">
    <property type="entry name" value="Thr_dehydrog"/>
    <property type="match status" value="1"/>
</dbReference>
<dbReference type="InterPro" id="IPR013149">
    <property type="entry name" value="ADH-like_C"/>
</dbReference>
<dbReference type="InterPro" id="IPR013154">
    <property type="entry name" value="ADH-like_N"/>
</dbReference>
<dbReference type="InterPro" id="IPR002328">
    <property type="entry name" value="ADH_Zn_CS"/>
</dbReference>
<dbReference type="InterPro" id="IPR011032">
    <property type="entry name" value="GroES-like_sf"/>
</dbReference>
<dbReference type="InterPro" id="IPR004627">
    <property type="entry name" value="L-Threonine_3-DHase"/>
</dbReference>
<dbReference type="InterPro" id="IPR036291">
    <property type="entry name" value="NAD(P)-bd_dom_sf"/>
</dbReference>
<dbReference type="InterPro" id="IPR020843">
    <property type="entry name" value="PKS_ER"/>
</dbReference>
<dbReference type="InterPro" id="IPR050129">
    <property type="entry name" value="Zn_alcohol_dh"/>
</dbReference>
<dbReference type="NCBIfam" id="NF003808">
    <property type="entry name" value="PRK05396.1"/>
    <property type="match status" value="1"/>
</dbReference>
<dbReference type="NCBIfam" id="TIGR00692">
    <property type="entry name" value="tdh"/>
    <property type="match status" value="1"/>
</dbReference>
<dbReference type="PANTHER" id="PTHR43401">
    <property type="entry name" value="L-THREONINE 3-DEHYDROGENASE"/>
    <property type="match status" value="1"/>
</dbReference>
<dbReference type="PANTHER" id="PTHR43401:SF2">
    <property type="entry name" value="L-THREONINE 3-DEHYDROGENASE"/>
    <property type="match status" value="1"/>
</dbReference>
<dbReference type="Pfam" id="PF08240">
    <property type="entry name" value="ADH_N"/>
    <property type="match status" value="1"/>
</dbReference>
<dbReference type="Pfam" id="PF00107">
    <property type="entry name" value="ADH_zinc_N"/>
    <property type="match status" value="1"/>
</dbReference>
<dbReference type="SMART" id="SM00829">
    <property type="entry name" value="PKS_ER"/>
    <property type="match status" value="1"/>
</dbReference>
<dbReference type="SUPFAM" id="SSF50129">
    <property type="entry name" value="GroES-like"/>
    <property type="match status" value="1"/>
</dbReference>
<dbReference type="SUPFAM" id="SSF51735">
    <property type="entry name" value="NAD(P)-binding Rossmann-fold domains"/>
    <property type="match status" value="1"/>
</dbReference>
<dbReference type="PROSITE" id="PS00059">
    <property type="entry name" value="ADH_ZINC"/>
    <property type="match status" value="1"/>
</dbReference>
<organism>
    <name type="scientific">Edwardsiella ictaluri (strain 93-146)</name>
    <dbReference type="NCBI Taxonomy" id="634503"/>
    <lineage>
        <taxon>Bacteria</taxon>
        <taxon>Pseudomonadati</taxon>
        <taxon>Pseudomonadota</taxon>
        <taxon>Gammaproteobacteria</taxon>
        <taxon>Enterobacterales</taxon>
        <taxon>Hafniaceae</taxon>
        <taxon>Edwardsiella</taxon>
    </lineage>
</organism>